<reference key="1">
    <citation type="journal article" date="2005" name="Science">
        <title>The transcriptional landscape of the mammalian genome.</title>
        <authorList>
            <person name="Carninci P."/>
            <person name="Kasukawa T."/>
            <person name="Katayama S."/>
            <person name="Gough J."/>
            <person name="Frith M.C."/>
            <person name="Maeda N."/>
            <person name="Oyama R."/>
            <person name="Ravasi T."/>
            <person name="Lenhard B."/>
            <person name="Wells C."/>
            <person name="Kodzius R."/>
            <person name="Shimokawa K."/>
            <person name="Bajic V.B."/>
            <person name="Brenner S.E."/>
            <person name="Batalov S."/>
            <person name="Forrest A.R."/>
            <person name="Zavolan M."/>
            <person name="Davis M.J."/>
            <person name="Wilming L.G."/>
            <person name="Aidinis V."/>
            <person name="Allen J.E."/>
            <person name="Ambesi-Impiombato A."/>
            <person name="Apweiler R."/>
            <person name="Aturaliya R.N."/>
            <person name="Bailey T.L."/>
            <person name="Bansal M."/>
            <person name="Baxter L."/>
            <person name="Beisel K.W."/>
            <person name="Bersano T."/>
            <person name="Bono H."/>
            <person name="Chalk A.M."/>
            <person name="Chiu K.P."/>
            <person name="Choudhary V."/>
            <person name="Christoffels A."/>
            <person name="Clutterbuck D.R."/>
            <person name="Crowe M.L."/>
            <person name="Dalla E."/>
            <person name="Dalrymple B.P."/>
            <person name="de Bono B."/>
            <person name="Della Gatta G."/>
            <person name="di Bernardo D."/>
            <person name="Down T."/>
            <person name="Engstrom P."/>
            <person name="Fagiolini M."/>
            <person name="Faulkner G."/>
            <person name="Fletcher C.F."/>
            <person name="Fukushima T."/>
            <person name="Furuno M."/>
            <person name="Futaki S."/>
            <person name="Gariboldi M."/>
            <person name="Georgii-Hemming P."/>
            <person name="Gingeras T.R."/>
            <person name="Gojobori T."/>
            <person name="Green R.E."/>
            <person name="Gustincich S."/>
            <person name="Harbers M."/>
            <person name="Hayashi Y."/>
            <person name="Hensch T.K."/>
            <person name="Hirokawa N."/>
            <person name="Hill D."/>
            <person name="Huminiecki L."/>
            <person name="Iacono M."/>
            <person name="Ikeo K."/>
            <person name="Iwama A."/>
            <person name="Ishikawa T."/>
            <person name="Jakt M."/>
            <person name="Kanapin A."/>
            <person name="Katoh M."/>
            <person name="Kawasawa Y."/>
            <person name="Kelso J."/>
            <person name="Kitamura H."/>
            <person name="Kitano H."/>
            <person name="Kollias G."/>
            <person name="Krishnan S.P."/>
            <person name="Kruger A."/>
            <person name="Kummerfeld S.K."/>
            <person name="Kurochkin I.V."/>
            <person name="Lareau L.F."/>
            <person name="Lazarevic D."/>
            <person name="Lipovich L."/>
            <person name="Liu J."/>
            <person name="Liuni S."/>
            <person name="McWilliam S."/>
            <person name="Madan Babu M."/>
            <person name="Madera M."/>
            <person name="Marchionni L."/>
            <person name="Matsuda H."/>
            <person name="Matsuzawa S."/>
            <person name="Miki H."/>
            <person name="Mignone F."/>
            <person name="Miyake S."/>
            <person name="Morris K."/>
            <person name="Mottagui-Tabar S."/>
            <person name="Mulder N."/>
            <person name="Nakano N."/>
            <person name="Nakauchi H."/>
            <person name="Ng P."/>
            <person name="Nilsson R."/>
            <person name="Nishiguchi S."/>
            <person name="Nishikawa S."/>
            <person name="Nori F."/>
            <person name="Ohara O."/>
            <person name="Okazaki Y."/>
            <person name="Orlando V."/>
            <person name="Pang K.C."/>
            <person name="Pavan W.J."/>
            <person name="Pavesi G."/>
            <person name="Pesole G."/>
            <person name="Petrovsky N."/>
            <person name="Piazza S."/>
            <person name="Reed J."/>
            <person name="Reid J.F."/>
            <person name="Ring B.Z."/>
            <person name="Ringwald M."/>
            <person name="Rost B."/>
            <person name="Ruan Y."/>
            <person name="Salzberg S.L."/>
            <person name="Sandelin A."/>
            <person name="Schneider C."/>
            <person name="Schoenbach C."/>
            <person name="Sekiguchi K."/>
            <person name="Semple C.A."/>
            <person name="Seno S."/>
            <person name="Sessa L."/>
            <person name="Sheng Y."/>
            <person name="Shibata Y."/>
            <person name="Shimada H."/>
            <person name="Shimada K."/>
            <person name="Silva D."/>
            <person name="Sinclair B."/>
            <person name="Sperling S."/>
            <person name="Stupka E."/>
            <person name="Sugiura K."/>
            <person name="Sultana R."/>
            <person name="Takenaka Y."/>
            <person name="Taki K."/>
            <person name="Tammoja K."/>
            <person name="Tan S.L."/>
            <person name="Tang S."/>
            <person name="Taylor M.S."/>
            <person name="Tegner J."/>
            <person name="Teichmann S.A."/>
            <person name="Ueda H.R."/>
            <person name="van Nimwegen E."/>
            <person name="Verardo R."/>
            <person name="Wei C.L."/>
            <person name="Yagi K."/>
            <person name="Yamanishi H."/>
            <person name="Zabarovsky E."/>
            <person name="Zhu S."/>
            <person name="Zimmer A."/>
            <person name="Hide W."/>
            <person name="Bult C."/>
            <person name="Grimmond S.M."/>
            <person name="Teasdale R.D."/>
            <person name="Liu E.T."/>
            <person name="Brusic V."/>
            <person name="Quackenbush J."/>
            <person name="Wahlestedt C."/>
            <person name="Mattick J.S."/>
            <person name="Hume D.A."/>
            <person name="Kai C."/>
            <person name="Sasaki D."/>
            <person name="Tomaru Y."/>
            <person name="Fukuda S."/>
            <person name="Kanamori-Katayama M."/>
            <person name="Suzuki M."/>
            <person name="Aoki J."/>
            <person name="Arakawa T."/>
            <person name="Iida J."/>
            <person name="Imamura K."/>
            <person name="Itoh M."/>
            <person name="Kato T."/>
            <person name="Kawaji H."/>
            <person name="Kawagashira N."/>
            <person name="Kawashima T."/>
            <person name="Kojima M."/>
            <person name="Kondo S."/>
            <person name="Konno H."/>
            <person name="Nakano K."/>
            <person name="Ninomiya N."/>
            <person name="Nishio T."/>
            <person name="Okada M."/>
            <person name="Plessy C."/>
            <person name="Shibata K."/>
            <person name="Shiraki T."/>
            <person name="Suzuki S."/>
            <person name="Tagami M."/>
            <person name="Waki K."/>
            <person name="Watahiki A."/>
            <person name="Okamura-Oho Y."/>
            <person name="Suzuki H."/>
            <person name="Kawai J."/>
            <person name="Hayashizaki Y."/>
        </authorList>
    </citation>
    <scope>NUCLEOTIDE SEQUENCE [LARGE SCALE MRNA]</scope>
    <source>
        <strain>C57BL/6J</strain>
        <tissue>Embryo</tissue>
        <tissue>Embryonic liver</tissue>
        <tissue>Kidney</tissue>
    </source>
</reference>
<reference key="2">
    <citation type="journal article" date="2004" name="Genome Res.">
        <title>The status, quality, and expansion of the NIH full-length cDNA project: the Mammalian Gene Collection (MGC).</title>
        <authorList>
            <consortium name="The MGC Project Team"/>
        </authorList>
    </citation>
    <scope>NUCLEOTIDE SEQUENCE [LARGE SCALE MRNA]</scope>
    <source>
        <tissue>Testis</tissue>
    </source>
</reference>
<reference key="3">
    <citation type="submission" date="2007-04" db="UniProtKB">
        <authorList>
            <person name="Lubec G."/>
            <person name="Kang S.U."/>
        </authorList>
    </citation>
    <scope>PROTEIN SEQUENCE OF 10-26; 45-60 AND 81-88</scope>
    <scope>IDENTIFICATION BY MASS SPECTROMETRY</scope>
    <source>
        <strain>C57BL/6J</strain>
        <tissue>Brain</tissue>
    </source>
</reference>
<reference key="4">
    <citation type="journal article" date="2010" name="Cell">
        <title>A tissue-specific atlas of mouse protein phosphorylation and expression.</title>
        <authorList>
            <person name="Huttlin E.L."/>
            <person name="Jedrychowski M.P."/>
            <person name="Elias J.E."/>
            <person name="Goswami T."/>
            <person name="Rad R."/>
            <person name="Beausoleil S.A."/>
            <person name="Villen J."/>
            <person name="Haas W."/>
            <person name="Sowa M.E."/>
            <person name="Gygi S.P."/>
        </authorList>
    </citation>
    <scope>IDENTIFICATION BY MASS SPECTROMETRY [LARGE SCALE ANALYSIS]</scope>
    <source>
        <tissue>Brain</tissue>
        <tissue>Brown adipose tissue</tissue>
        <tissue>Heart</tissue>
        <tissue>Kidney</tissue>
        <tissue>Liver</tissue>
        <tissue>Lung</tissue>
        <tissue>Pancreas</tissue>
        <tissue>Spleen</tissue>
        <tissue>Testis</tissue>
    </source>
</reference>
<reference evidence="4" key="5">
    <citation type="journal article" date="2024" name="Nat. Struct. Mol. Biol.">
        <title>SCAF1 drives the compositional diversity of mammalian respirasomes.</title>
        <authorList>
            <person name="Vercellino I."/>
            <person name="Sazanov L.A."/>
        </authorList>
    </citation>
    <scope>STRUCTURE BY ELECTRON MICROSCOPY (3.60 ANGSTROMS) IN COMPLEX WITH MITOCHONDRIAL RESPIRATORY SUPERCOMPLEX</scope>
    <scope>FUNCTION</scope>
    <scope>SUBCELLULAR LOCATION</scope>
    <scope>SUBUNIT</scope>
</reference>
<feature type="chain" id="PRO_0000174303" description="NADH dehydrogenase [ubiquinone] 1 alpha subcomplex subunit 6">
    <location>
        <begin position="1"/>
        <end position="131"/>
    </location>
</feature>
<feature type="helix" evidence="6">
    <location>
        <begin position="28"/>
        <end position="53"/>
    </location>
</feature>
<feature type="helix" evidence="6">
    <location>
        <begin position="59"/>
        <end position="71"/>
    </location>
</feature>
<feature type="turn" evidence="6">
    <location>
        <begin position="72"/>
        <end position="75"/>
    </location>
</feature>
<feature type="helix" evidence="6">
    <location>
        <begin position="79"/>
        <end position="97"/>
    </location>
</feature>
<feature type="strand" evidence="7">
    <location>
        <begin position="98"/>
        <end position="101"/>
    </location>
</feature>
<feature type="helix" evidence="6">
    <location>
        <begin position="103"/>
        <end position="107"/>
    </location>
</feature>
<feature type="helix" evidence="6">
    <location>
        <begin position="108"/>
        <end position="110"/>
    </location>
</feature>
<feature type="strand" evidence="5">
    <location>
        <begin position="112"/>
        <end position="114"/>
    </location>
</feature>
<feature type="helix" evidence="6">
    <location>
        <begin position="121"/>
        <end position="127"/>
    </location>
</feature>
<sequence>MAAAATGLRQAAAAAASTSVKPIFSRDLNEAKRRVRELYRAWYREVPNTVHLMQLDITVKQGRDKVREMFMKNAHVTDPRVVDLLVIKGKMELQETIKVWKQRTHVMRFFHETETPRPKDFLSKFYMGHDP</sequence>
<proteinExistence type="evidence at protein level"/>
<dbReference type="EMBL" id="AK002749">
    <property type="protein sequence ID" value="BAB22326.1"/>
    <property type="molecule type" value="mRNA"/>
</dbReference>
<dbReference type="EMBL" id="AK010988">
    <property type="protein sequence ID" value="BAB27308.1"/>
    <property type="molecule type" value="mRNA"/>
</dbReference>
<dbReference type="EMBL" id="AK012328">
    <property type="protein sequence ID" value="BAB28165.1"/>
    <property type="molecule type" value="mRNA"/>
</dbReference>
<dbReference type="EMBL" id="BC048451">
    <property type="protein sequence ID" value="AAH48451.1"/>
    <property type="molecule type" value="mRNA"/>
</dbReference>
<dbReference type="CCDS" id="CCDS27689.1"/>
<dbReference type="RefSeq" id="NP_080263.1">
    <property type="nucleotide sequence ID" value="NM_025987.4"/>
</dbReference>
<dbReference type="PDB" id="6G2J">
    <property type="method" value="EM"/>
    <property type="resolution" value="3.30 A"/>
    <property type="chains" value="W=1-131"/>
</dbReference>
<dbReference type="PDB" id="6G72">
    <property type="method" value="EM"/>
    <property type="resolution" value="3.90 A"/>
    <property type="chains" value="W=1-131"/>
</dbReference>
<dbReference type="PDB" id="6ZR2">
    <property type="method" value="EM"/>
    <property type="resolution" value="3.10 A"/>
    <property type="chains" value="W=1-131"/>
</dbReference>
<dbReference type="PDB" id="6ZTQ">
    <property type="method" value="EM"/>
    <property type="resolution" value="3.00 A"/>
    <property type="chains" value="W=1-131"/>
</dbReference>
<dbReference type="PDB" id="7AK5">
    <property type="method" value="EM"/>
    <property type="resolution" value="3.17 A"/>
    <property type="chains" value="W=1-131"/>
</dbReference>
<dbReference type="PDB" id="7AK6">
    <property type="method" value="EM"/>
    <property type="resolution" value="3.82 A"/>
    <property type="chains" value="W=1-131"/>
</dbReference>
<dbReference type="PDB" id="7B93">
    <property type="method" value="EM"/>
    <property type="resolution" value="3.04 A"/>
    <property type="chains" value="W=1-131"/>
</dbReference>
<dbReference type="PDB" id="7PSA">
    <property type="method" value="EM"/>
    <property type="resolution" value="3.40 A"/>
    <property type="chains" value="W=1-131"/>
</dbReference>
<dbReference type="PDB" id="8C2S">
    <property type="method" value="EM"/>
    <property type="resolution" value="3.90 A"/>
    <property type="chains" value="W=1-131"/>
</dbReference>
<dbReference type="PDB" id="8CA3">
    <property type="method" value="EM"/>
    <property type="resolution" value="3.20 A"/>
    <property type="chains" value="W=1-131"/>
</dbReference>
<dbReference type="PDB" id="8CA5">
    <property type="method" value="EM"/>
    <property type="resolution" value="3.90 A"/>
    <property type="chains" value="W=1-131"/>
</dbReference>
<dbReference type="PDB" id="8IAO">
    <property type="method" value="EM"/>
    <property type="resolution" value="4.20 A"/>
    <property type="chains" value="W=1-131"/>
</dbReference>
<dbReference type="PDB" id="8IAP">
    <property type="method" value="EM"/>
    <property type="resolution" value="3.20 A"/>
    <property type="chains" value="W=1-131"/>
</dbReference>
<dbReference type="PDB" id="8IB4">
    <property type="method" value="EM"/>
    <property type="resolution" value="4.30 A"/>
    <property type="chains" value="W=1-131"/>
</dbReference>
<dbReference type="PDB" id="8IB5">
    <property type="method" value="EM"/>
    <property type="resolution" value="3.30 A"/>
    <property type="chains" value="W=1-131"/>
</dbReference>
<dbReference type="PDB" id="8IB9">
    <property type="method" value="EM"/>
    <property type="resolution" value="4.30 A"/>
    <property type="chains" value="W=1-131"/>
</dbReference>
<dbReference type="PDB" id="8IBA">
    <property type="method" value="EM"/>
    <property type="resolution" value="3.20 A"/>
    <property type="chains" value="W=1-131"/>
</dbReference>
<dbReference type="PDB" id="8IBD">
    <property type="method" value="EM"/>
    <property type="resolution" value="4.20 A"/>
    <property type="chains" value="W=1-131"/>
</dbReference>
<dbReference type="PDB" id="8IBE">
    <property type="method" value="EM"/>
    <property type="resolution" value="3.30 A"/>
    <property type="chains" value="W=1-131"/>
</dbReference>
<dbReference type="PDB" id="8IC2">
    <property type="method" value="EM"/>
    <property type="resolution" value="6.30 A"/>
    <property type="chains" value="W=1-131"/>
</dbReference>
<dbReference type="PDB" id="8IC3">
    <property type="method" value="EM"/>
    <property type="resolution" value="3.20 A"/>
    <property type="chains" value="W=1-131"/>
</dbReference>
<dbReference type="PDB" id="8OLT">
    <property type="method" value="EM"/>
    <property type="resolution" value="2.84 A"/>
    <property type="chains" value="W=1-131"/>
</dbReference>
<dbReference type="PDB" id="8OM1">
    <property type="method" value="EM"/>
    <property type="resolution" value="2.39 A"/>
    <property type="chains" value="W=1-131"/>
</dbReference>
<dbReference type="PDB" id="8PW5">
    <property type="method" value="EM"/>
    <property type="resolution" value="3.60 A"/>
    <property type="chains" value="W1=1-131"/>
</dbReference>
<dbReference type="PDB" id="8PW6">
    <property type="method" value="EM"/>
    <property type="resolution" value="3.30 A"/>
    <property type="chains" value="W1=1-131"/>
</dbReference>
<dbReference type="PDB" id="8PW7">
    <property type="method" value="EM"/>
    <property type="resolution" value="3.50 A"/>
    <property type="chains" value="W1=1-131"/>
</dbReference>
<dbReference type="PDB" id="8RGP">
    <property type="method" value="EM"/>
    <property type="resolution" value="3.00 A"/>
    <property type="chains" value="W=1-131"/>
</dbReference>
<dbReference type="PDB" id="8RGQ">
    <property type="method" value="EM"/>
    <property type="resolution" value="3.00 A"/>
    <property type="chains" value="W=1-131"/>
</dbReference>
<dbReference type="PDB" id="8RGR">
    <property type="method" value="EM"/>
    <property type="resolution" value="2.90 A"/>
    <property type="chains" value="W=1-131"/>
</dbReference>
<dbReference type="PDB" id="8RGT">
    <property type="method" value="EM"/>
    <property type="resolution" value="3.10 A"/>
    <property type="chains" value="W=1-131"/>
</dbReference>
<dbReference type="PDB" id="8UCA">
    <property type="method" value="EM"/>
    <property type="resolution" value="3.70 A"/>
    <property type="chains" value="A6/a6=1-131"/>
</dbReference>
<dbReference type="PDB" id="8XNL">
    <property type="method" value="EM"/>
    <property type="resolution" value="3.10 A"/>
    <property type="chains" value="W=1-131"/>
</dbReference>
<dbReference type="PDB" id="8XNM">
    <property type="method" value="EM"/>
    <property type="resolution" value="3.50 A"/>
    <property type="chains" value="W=1-131"/>
</dbReference>
<dbReference type="PDB" id="8XNN">
    <property type="method" value="EM"/>
    <property type="resolution" value="3.60 A"/>
    <property type="chains" value="W=1-131"/>
</dbReference>
<dbReference type="PDB" id="8XNO">
    <property type="method" value="EM"/>
    <property type="resolution" value="3.40 A"/>
    <property type="chains" value="W=1-131"/>
</dbReference>
<dbReference type="PDB" id="8XNP">
    <property type="method" value="EM"/>
    <property type="resolution" value="3.50 A"/>
    <property type="chains" value="W=1-131"/>
</dbReference>
<dbReference type="PDB" id="8XNQ">
    <property type="method" value="EM"/>
    <property type="resolution" value="3.70 A"/>
    <property type="chains" value="W=1-131"/>
</dbReference>
<dbReference type="PDB" id="8XNR">
    <property type="method" value="EM"/>
    <property type="resolution" value="3.30 A"/>
    <property type="chains" value="W=1-131"/>
</dbReference>
<dbReference type="PDB" id="8XNS">
    <property type="method" value="EM"/>
    <property type="resolution" value="3.50 A"/>
    <property type="chains" value="W=1-131"/>
</dbReference>
<dbReference type="PDB" id="8XNT">
    <property type="method" value="EM"/>
    <property type="resolution" value="4.10 A"/>
    <property type="chains" value="W=1-131"/>
</dbReference>
<dbReference type="PDB" id="8XNU">
    <property type="method" value="EM"/>
    <property type="resolution" value="3.60 A"/>
    <property type="chains" value="W=1-131"/>
</dbReference>
<dbReference type="PDB" id="8XNV">
    <property type="method" value="EM"/>
    <property type="resolution" value="3.30 A"/>
    <property type="chains" value="W=1-131"/>
</dbReference>
<dbReference type="PDB" id="8XNW">
    <property type="method" value="EM"/>
    <property type="resolution" value="3.60 A"/>
    <property type="chains" value="W=1-131"/>
</dbReference>
<dbReference type="PDB" id="8XNX">
    <property type="method" value="EM"/>
    <property type="resolution" value="3.50 A"/>
    <property type="chains" value="W=1-131"/>
</dbReference>
<dbReference type="PDB" id="8XNY">
    <property type="method" value="EM"/>
    <property type="resolution" value="4.10 A"/>
    <property type="chains" value="W=1-131"/>
</dbReference>
<dbReference type="PDB" id="8XNZ">
    <property type="method" value="EM"/>
    <property type="resolution" value="3.30 A"/>
    <property type="chains" value="W=1-131"/>
</dbReference>
<dbReference type="PDB" id="8XO0">
    <property type="method" value="EM"/>
    <property type="resolution" value="4.20 A"/>
    <property type="chains" value="W=1-131"/>
</dbReference>
<dbReference type="PDBsum" id="6G2J"/>
<dbReference type="PDBsum" id="6G72"/>
<dbReference type="PDBsum" id="6ZR2"/>
<dbReference type="PDBsum" id="6ZTQ"/>
<dbReference type="PDBsum" id="7AK5"/>
<dbReference type="PDBsum" id="7AK6"/>
<dbReference type="PDBsum" id="7B93"/>
<dbReference type="PDBsum" id="7PSA"/>
<dbReference type="PDBsum" id="8C2S"/>
<dbReference type="PDBsum" id="8CA3"/>
<dbReference type="PDBsum" id="8CA5"/>
<dbReference type="PDBsum" id="8IAO"/>
<dbReference type="PDBsum" id="8IAP"/>
<dbReference type="PDBsum" id="8IB4"/>
<dbReference type="PDBsum" id="8IB5"/>
<dbReference type="PDBsum" id="8IB9"/>
<dbReference type="PDBsum" id="8IBA"/>
<dbReference type="PDBsum" id="8IBD"/>
<dbReference type="PDBsum" id="8IBE"/>
<dbReference type="PDBsum" id="8IC2"/>
<dbReference type="PDBsum" id="8IC3"/>
<dbReference type="PDBsum" id="8OLT"/>
<dbReference type="PDBsum" id="8OM1"/>
<dbReference type="PDBsum" id="8PW5"/>
<dbReference type="PDBsum" id="8PW6"/>
<dbReference type="PDBsum" id="8PW7"/>
<dbReference type="PDBsum" id="8RGP"/>
<dbReference type="PDBsum" id="8RGQ"/>
<dbReference type="PDBsum" id="8RGR"/>
<dbReference type="PDBsum" id="8RGT"/>
<dbReference type="PDBsum" id="8UCA"/>
<dbReference type="PDBsum" id="8XNL"/>
<dbReference type="PDBsum" id="8XNM"/>
<dbReference type="PDBsum" id="8XNN"/>
<dbReference type="PDBsum" id="8XNO"/>
<dbReference type="PDBsum" id="8XNP"/>
<dbReference type="PDBsum" id="8XNQ"/>
<dbReference type="PDBsum" id="8XNR"/>
<dbReference type="PDBsum" id="8XNS"/>
<dbReference type="PDBsum" id="8XNT"/>
<dbReference type="PDBsum" id="8XNU"/>
<dbReference type="PDBsum" id="8XNV"/>
<dbReference type="PDBsum" id="8XNW"/>
<dbReference type="PDBsum" id="8XNX"/>
<dbReference type="PDBsum" id="8XNY"/>
<dbReference type="PDBsum" id="8XNZ"/>
<dbReference type="PDBsum" id="8XO0"/>
<dbReference type="EMDB" id="EMD-16398"/>
<dbReference type="EMDB" id="EMD-16516"/>
<dbReference type="EMDB" id="EMD-16518"/>
<dbReference type="EMDB" id="EMD-16962"/>
<dbReference type="EMDB" id="EMD-16965"/>
<dbReference type="EMDB" id="EMD-17989"/>
<dbReference type="EMDB" id="EMD-17990"/>
<dbReference type="EMDB" id="EMD-17991"/>
<dbReference type="EMDB" id="EMD-19145"/>
<dbReference type="EMDB" id="EMD-19146"/>
<dbReference type="EMDB" id="EMD-19147"/>
<dbReference type="EMDB" id="EMD-19148"/>
<dbReference type="EMDB" id="EMD-35313"/>
<dbReference type="EMDB" id="EMD-35314"/>
<dbReference type="EMDB" id="EMD-35331"/>
<dbReference type="EMDB" id="EMD-35332"/>
<dbReference type="EMDB" id="EMD-35336"/>
<dbReference type="EMDB" id="EMD-35337"/>
<dbReference type="EMDB" id="EMD-35340"/>
<dbReference type="EMDB" id="EMD-35341"/>
<dbReference type="EMDB" id="EMD-35352"/>
<dbReference type="EMDB" id="EMD-35353"/>
<dbReference type="EMDB" id="EMD-38506"/>
<dbReference type="EMDB" id="EMD-38507"/>
<dbReference type="EMDB" id="EMD-38508"/>
<dbReference type="EMDB" id="EMD-38509"/>
<dbReference type="EMDB" id="EMD-38510"/>
<dbReference type="EMDB" id="EMD-38511"/>
<dbReference type="EMDB" id="EMD-38512"/>
<dbReference type="EMDB" id="EMD-38513"/>
<dbReference type="EMDB" id="EMD-38514"/>
<dbReference type="EMDB" id="EMD-38515"/>
<dbReference type="EMDB" id="EMD-38516"/>
<dbReference type="EMDB" id="EMD-38517"/>
<dbReference type="EMDB" id="EMD-38518"/>
<dbReference type="EMDB" id="EMD-38519"/>
<dbReference type="EMDB" id="EMD-38520"/>
<dbReference type="EMDB" id="EMD-38521"/>
<dbReference type="EMDB" id="EMD-42122"/>
<dbReference type="EMDB" id="EMD-4356"/>
<dbReference type="SMR" id="Q9CQZ5"/>
<dbReference type="BioGRID" id="211963">
    <property type="interactions" value="65"/>
</dbReference>
<dbReference type="ComplexPortal" id="CPX-266">
    <property type="entry name" value="Mitochondrial respiratory chain complex I"/>
</dbReference>
<dbReference type="CORUM" id="Q9CQZ5"/>
<dbReference type="FunCoup" id="Q9CQZ5">
    <property type="interactions" value="2106"/>
</dbReference>
<dbReference type="IntAct" id="Q9CQZ5">
    <property type="interactions" value="3"/>
</dbReference>
<dbReference type="STRING" id="10090.ENSMUSP00000023085"/>
<dbReference type="GlyGen" id="Q9CQZ5">
    <property type="glycosylation" value="1 site, 1 O-linked glycan (1 site)"/>
</dbReference>
<dbReference type="iPTMnet" id="Q9CQZ5"/>
<dbReference type="PhosphoSitePlus" id="Q9CQZ5"/>
<dbReference type="SwissPalm" id="Q9CQZ5"/>
<dbReference type="jPOST" id="Q9CQZ5"/>
<dbReference type="PaxDb" id="10090-ENSMUSP00000023085"/>
<dbReference type="PeptideAtlas" id="Q9CQZ5"/>
<dbReference type="ProteomicsDB" id="287467"/>
<dbReference type="Pumba" id="Q9CQZ5"/>
<dbReference type="Antibodypedia" id="45919">
    <property type="antibodies" value="109 antibodies from 22 providers"/>
</dbReference>
<dbReference type="DNASU" id="67130"/>
<dbReference type="Ensembl" id="ENSMUST00000023085.7">
    <property type="protein sequence ID" value="ENSMUSP00000023085.6"/>
    <property type="gene ID" value="ENSMUSG00000022450.7"/>
</dbReference>
<dbReference type="GeneID" id="67130"/>
<dbReference type="KEGG" id="mmu:67130"/>
<dbReference type="UCSC" id="uc007wzc.2">
    <property type="organism name" value="mouse"/>
</dbReference>
<dbReference type="AGR" id="MGI:1914380"/>
<dbReference type="CTD" id="4700"/>
<dbReference type="MGI" id="MGI:1914380">
    <property type="gene designation" value="Ndufa6"/>
</dbReference>
<dbReference type="VEuPathDB" id="HostDB:ENSMUSG00000022450"/>
<dbReference type="eggNOG" id="KOG3426">
    <property type="taxonomic scope" value="Eukaryota"/>
</dbReference>
<dbReference type="GeneTree" id="ENSGT00390000018898"/>
<dbReference type="HOGENOM" id="CLU_111660_3_0_1"/>
<dbReference type="InParanoid" id="Q9CQZ5"/>
<dbReference type="OMA" id="FWKQTTH"/>
<dbReference type="OrthoDB" id="14535at2759"/>
<dbReference type="PhylomeDB" id="Q9CQZ5"/>
<dbReference type="TreeFam" id="TF105625"/>
<dbReference type="Reactome" id="R-MMU-611105">
    <property type="pathway name" value="Respiratory electron transport"/>
</dbReference>
<dbReference type="Reactome" id="R-MMU-6799198">
    <property type="pathway name" value="Complex I biogenesis"/>
</dbReference>
<dbReference type="BioGRID-ORCS" id="67130">
    <property type="hits" value="19 hits in 79 CRISPR screens"/>
</dbReference>
<dbReference type="CD-CODE" id="CE726F99">
    <property type="entry name" value="Postsynaptic density"/>
</dbReference>
<dbReference type="ChiTaRS" id="Ndufa6">
    <property type="organism name" value="mouse"/>
</dbReference>
<dbReference type="PRO" id="PR:Q9CQZ5"/>
<dbReference type="Proteomes" id="UP000000589">
    <property type="component" value="Chromosome 15"/>
</dbReference>
<dbReference type="RNAct" id="Q9CQZ5">
    <property type="molecule type" value="protein"/>
</dbReference>
<dbReference type="Bgee" id="ENSMUSG00000022450">
    <property type="expression patterns" value="Expressed in right kidney and 260 other cell types or tissues"/>
</dbReference>
<dbReference type="ExpressionAtlas" id="Q9CQZ5">
    <property type="expression patterns" value="baseline and differential"/>
</dbReference>
<dbReference type="GO" id="GO:0005743">
    <property type="term" value="C:mitochondrial inner membrane"/>
    <property type="evidence" value="ECO:0000314"/>
    <property type="project" value="UniProtKB"/>
</dbReference>
<dbReference type="GO" id="GO:0005739">
    <property type="term" value="C:mitochondrion"/>
    <property type="evidence" value="ECO:0007005"/>
    <property type="project" value="MGI"/>
</dbReference>
<dbReference type="GO" id="GO:0045271">
    <property type="term" value="C:respiratory chain complex I"/>
    <property type="evidence" value="ECO:0000314"/>
    <property type="project" value="UniProtKB"/>
</dbReference>
<dbReference type="GO" id="GO:0009060">
    <property type="term" value="P:aerobic respiration"/>
    <property type="evidence" value="ECO:0000303"/>
    <property type="project" value="ComplexPortal"/>
</dbReference>
<dbReference type="GO" id="GO:0032981">
    <property type="term" value="P:mitochondrial respiratory chain complex I assembly"/>
    <property type="evidence" value="ECO:0000250"/>
    <property type="project" value="UniProtKB"/>
</dbReference>
<dbReference type="GO" id="GO:0042776">
    <property type="term" value="P:proton motive force-driven mitochondrial ATP synthesis"/>
    <property type="evidence" value="ECO:0000303"/>
    <property type="project" value="ComplexPortal"/>
</dbReference>
<dbReference type="CDD" id="cd20266">
    <property type="entry name" value="Complex1_LYR_NDUFA6_LYRM6"/>
    <property type="match status" value="1"/>
</dbReference>
<dbReference type="InterPro" id="IPR045299">
    <property type="entry name" value="Complex1_LYR_NDUFA6_LYRM6"/>
</dbReference>
<dbReference type="InterPro" id="IPR016488">
    <property type="entry name" value="NADH_Ub_cplx-1_asu_su-6"/>
</dbReference>
<dbReference type="PANTHER" id="PTHR12964:SF0">
    <property type="entry name" value="NADH DEHYDROGENASE [UBIQUINONE] 1 ALPHA SUBCOMPLEX SUBUNIT 6"/>
    <property type="match status" value="1"/>
</dbReference>
<dbReference type="PANTHER" id="PTHR12964">
    <property type="entry name" value="NADH-UBIQUINONE OXIDOREDUCTASE B14 SUBUNIT"/>
    <property type="match status" value="1"/>
</dbReference>
<dbReference type="Pfam" id="PF13233">
    <property type="entry name" value="Complex1_LYR_2"/>
    <property type="match status" value="1"/>
</dbReference>
<dbReference type="PIRSF" id="PIRSF006643">
    <property type="entry name" value="NDUA6"/>
    <property type="match status" value="1"/>
</dbReference>
<protein>
    <recommendedName>
        <fullName evidence="2">NADH dehydrogenase [ubiquinone] 1 alpha subcomplex subunit 6</fullName>
    </recommendedName>
    <alternativeName>
        <fullName>Complex I-B14</fullName>
        <shortName>CI-B14</shortName>
    </alternativeName>
    <alternativeName>
        <fullName>NADH-ubiquinone oxidoreductase B14 subunit</fullName>
    </alternativeName>
</protein>
<comment type="function">
    <text evidence="1">Accessory subunit of the mitochondrial membrane respiratory chain NADH dehydrogenase (Complex I), that is believed to be not involved in catalysis. Required for proper complex I assembly. Complex I functions in the transfer of electrons from NADH to the respiratory chain. The immediate electron acceptor for the enzyme is believed to be ubiquinone.</text>
</comment>
<comment type="subunit">
    <text evidence="1">Mammalian complex I is composed of 45 different subunits.</text>
</comment>
<comment type="subcellular location">
    <subcellularLocation>
        <location evidence="1">Mitochondrion inner membrane</location>
        <topology evidence="1">Peripheral membrane protein</topology>
        <orientation evidence="1">Matrix side</orientation>
    </subcellularLocation>
</comment>
<comment type="similarity">
    <text evidence="2">Belongs to the complex I LYR family.</text>
</comment>
<gene>
    <name evidence="3" type="primary">Ndufa6</name>
</gene>
<accession>Q9CQZ5</accession>
<keyword id="KW-0002">3D-structure</keyword>
<keyword id="KW-0903">Direct protein sequencing</keyword>
<keyword id="KW-0249">Electron transport</keyword>
<keyword id="KW-0472">Membrane</keyword>
<keyword id="KW-0496">Mitochondrion</keyword>
<keyword id="KW-0999">Mitochondrion inner membrane</keyword>
<keyword id="KW-1185">Reference proteome</keyword>
<keyword id="KW-0679">Respiratory chain</keyword>
<keyword id="KW-0813">Transport</keyword>
<organism>
    <name type="scientific">Mus musculus</name>
    <name type="common">Mouse</name>
    <dbReference type="NCBI Taxonomy" id="10090"/>
    <lineage>
        <taxon>Eukaryota</taxon>
        <taxon>Metazoa</taxon>
        <taxon>Chordata</taxon>
        <taxon>Craniata</taxon>
        <taxon>Vertebrata</taxon>
        <taxon>Euteleostomi</taxon>
        <taxon>Mammalia</taxon>
        <taxon>Eutheria</taxon>
        <taxon>Euarchontoglires</taxon>
        <taxon>Glires</taxon>
        <taxon>Rodentia</taxon>
        <taxon>Myomorpha</taxon>
        <taxon>Muroidea</taxon>
        <taxon>Muridae</taxon>
        <taxon>Murinae</taxon>
        <taxon>Mus</taxon>
        <taxon>Mus</taxon>
    </lineage>
</organism>
<evidence type="ECO:0000269" key="1">
    <source>
    </source>
</evidence>
<evidence type="ECO:0000305" key="2"/>
<evidence type="ECO:0000312" key="3">
    <source>
        <dbReference type="MGI" id="MGI:1914380"/>
    </source>
</evidence>
<evidence type="ECO:0007744" key="4">
    <source>
        <dbReference type="PDB" id="8PW5"/>
    </source>
</evidence>
<evidence type="ECO:0007829" key="5">
    <source>
        <dbReference type="PDB" id="6ZTQ"/>
    </source>
</evidence>
<evidence type="ECO:0007829" key="6">
    <source>
        <dbReference type="PDB" id="8OM1"/>
    </source>
</evidence>
<evidence type="ECO:0007829" key="7">
    <source>
        <dbReference type="PDB" id="8RGP"/>
    </source>
</evidence>
<name>NDUA6_MOUSE</name>